<sequence length="383" mass="39606">MRIGVGVSTAPDVRRAAAEAAAHAREELAGGTPALAVLLGSRSHTDQAVDLLAAVQASVEPAALIGCVAQGIVAGRHELENEPAVAVWLASGPPAETFHLDFVRTGSGALITGYRFDRTAHDLHLLLPDPYSFPSNLLIEHLNTDLPGTTVVGGVVSGGRRRGDTRLFRDRDVLTSGLVGVRLPGAHSVSVVSQGCRPIGEPYIVTGADGAVITELGGRPPLHRLREIVLGMAPDEQELVSRGLQIGIVVDEHLAVPGQGDFLIRGLLGADPTTGAIGIGEVVEVGATVQFQVRDAAAADKDLRLAVERAAAELPGPPVGGLLFTCNGRGRRMFGVTDHDASTIEDLLGGIPLAGFFAAGEIGPVAGHNALHGFTASMALFVD</sequence>
<keyword id="KW-1003">Cell membrane</keyword>
<keyword id="KW-0472">Membrane</keyword>
<keyword id="KW-1185">Reference proteome</keyword>
<keyword id="KW-0812">Transmembrane</keyword>
<keyword id="KW-1133">Transmembrane helix</keyword>
<gene>
    <name type="ordered locus">MT0656</name>
</gene>
<proteinExistence type="predicted"/>
<dbReference type="EMBL" id="AE000516">
    <property type="protein sequence ID" value="AAK44880.1"/>
    <property type="molecule type" value="Genomic_DNA"/>
</dbReference>
<dbReference type="PIR" id="A70612">
    <property type="entry name" value="A70612"/>
</dbReference>
<dbReference type="RefSeq" id="WP_003403248.1">
    <property type="nucleotide sequence ID" value="NZ_KK341227.1"/>
</dbReference>
<dbReference type="KEGG" id="mtc:MT0656"/>
<dbReference type="PATRIC" id="fig|83331.31.peg.696"/>
<dbReference type="HOGENOM" id="CLU_055814_1_0_11"/>
<dbReference type="Proteomes" id="UP000001020">
    <property type="component" value="Chromosome"/>
</dbReference>
<dbReference type="GO" id="GO:0005886">
    <property type="term" value="C:plasma membrane"/>
    <property type="evidence" value="ECO:0007669"/>
    <property type="project" value="UniProtKB-SubCell"/>
</dbReference>
<dbReference type="InterPro" id="IPR019494">
    <property type="entry name" value="FIST_C"/>
</dbReference>
<dbReference type="InterPro" id="IPR013702">
    <property type="entry name" value="FIST_domain_N"/>
</dbReference>
<dbReference type="InterPro" id="IPR016741">
    <property type="entry name" value="UCP018953"/>
</dbReference>
<dbReference type="PANTHER" id="PTHR14939">
    <property type="entry name" value="F-BOX ONLY PROTEIN 22"/>
    <property type="match status" value="1"/>
</dbReference>
<dbReference type="PANTHER" id="PTHR14939:SF5">
    <property type="entry name" value="F-BOX ONLY PROTEIN 22"/>
    <property type="match status" value="1"/>
</dbReference>
<dbReference type="Pfam" id="PF08495">
    <property type="entry name" value="FIST"/>
    <property type="match status" value="1"/>
</dbReference>
<dbReference type="Pfam" id="PF10442">
    <property type="entry name" value="FIST_C"/>
    <property type="match status" value="1"/>
</dbReference>
<dbReference type="PIRSF" id="PIRSF018953">
    <property type="entry name" value="UCP018953"/>
    <property type="match status" value="1"/>
</dbReference>
<dbReference type="SMART" id="SM00897">
    <property type="entry name" value="FIST"/>
    <property type="match status" value="1"/>
</dbReference>
<dbReference type="SMART" id="SM01204">
    <property type="entry name" value="FIST_C"/>
    <property type="match status" value="1"/>
</dbReference>
<accession>P9WKS6</accession>
<accession>L0T611</accession>
<accession>P64729</accession>
<accession>P96918</accession>
<feature type="chain" id="PRO_0000427602" description="Uncharacterized protein MT0656">
    <location>
        <begin position="1"/>
        <end position="383"/>
    </location>
</feature>
<feature type="transmembrane region" description="Helical" evidence="1">
    <location>
        <begin position="49"/>
        <end position="69"/>
    </location>
</feature>
<feature type="transmembrane region" description="Helical" evidence="1">
    <location>
        <begin position="347"/>
        <end position="367"/>
    </location>
</feature>
<protein>
    <recommendedName>
        <fullName>Uncharacterized protein MT0656</fullName>
    </recommendedName>
</protein>
<name>Y628_MYCTO</name>
<organism>
    <name type="scientific">Mycobacterium tuberculosis (strain CDC 1551 / Oshkosh)</name>
    <dbReference type="NCBI Taxonomy" id="83331"/>
    <lineage>
        <taxon>Bacteria</taxon>
        <taxon>Bacillati</taxon>
        <taxon>Actinomycetota</taxon>
        <taxon>Actinomycetes</taxon>
        <taxon>Mycobacteriales</taxon>
        <taxon>Mycobacteriaceae</taxon>
        <taxon>Mycobacterium</taxon>
        <taxon>Mycobacterium tuberculosis complex</taxon>
    </lineage>
</organism>
<evidence type="ECO:0000255" key="1"/>
<evidence type="ECO:0000305" key="2"/>
<reference key="1">
    <citation type="journal article" date="2002" name="J. Bacteriol.">
        <title>Whole-genome comparison of Mycobacterium tuberculosis clinical and laboratory strains.</title>
        <authorList>
            <person name="Fleischmann R.D."/>
            <person name="Alland D."/>
            <person name="Eisen J.A."/>
            <person name="Carpenter L."/>
            <person name="White O."/>
            <person name="Peterson J.D."/>
            <person name="DeBoy R.T."/>
            <person name="Dodson R.J."/>
            <person name="Gwinn M.L."/>
            <person name="Haft D.H."/>
            <person name="Hickey E.K."/>
            <person name="Kolonay J.F."/>
            <person name="Nelson W.C."/>
            <person name="Umayam L.A."/>
            <person name="Ermolaeva M.D."/>
            <person name="Salzberg S.L."/>
            <person name="Delcher A."/>
            <person name="Utterback T.R."/>
            <person name="Weidman J.F."/>
            <person name="Khouri H.M."/>
            <person name="Gill J."/>
            <person name="Mikula A."/>
            <person name="Bishai W."/>
            <person name="Jacobs W.R. Jr."/>
            <person name="Venter J.C."/>
            <person name="Fraser C.M."/>
        </authorList>
    </citation>
    <scope>NUCLEOTIDE SEQUENCE [LARGE SCALE GENOMIC DNA]</scope>
    <source>
        <strain>CDC 1551 / Oshkosh</strain>
    </source>
</reference>
<comment type="subcellular location">
    <subcellularLocation>
        <location evidence="2">Cell membrane</location>
        <topology evidence="2">Multi-pass membrane protein</topology>
    </subcellularLocation>
</comment>
<comment type="similarity">
    <text evidence="2">To M.tuberculosis Rv0874c.</text>
</comment>